<proteinExistence type="inferred from homology"/>
<keyword id="KW-0067">ATP-binding</keyword>
<keyword id="KW-0963">Cytoplasm</keyword>
<keyword id="KW-0418">Kinase</keyword>
<keyword id="KW-0460">Magnesium</keyword>
<keyword id="KW-0479">Metal-binding</keyword>
<keyword id="KW-0546">Nucleotide metabolism</keyword>
<keyword id="KW-0547">Nucleotide-binding</keyword>
<keyword id="KW-0597">Phosphoprotein</keyword>
<keyword id="KW-1185">Reference proteome</keyword>
<keyword id="KW-0808">Transferase</keyword>
<dbReference type="EC" id="2.7.4.6" evidence="1"/>
<dbReference type="EMBL" id="BX950229">
    <property type="protein sequence ID" value="CAF29839.1"/>
    <property type="status" value="ALT_INIT"/>
    <property type="molecule type" value="Genomic_DNA"/>
</dbReference>
<dbReference type="SMR" id="Q6M0I7"/>
<dbReference type="STRING" id="267377.MMP0283"/>
<dbReference type="EnsemblBacteria" id="CAF29839">
    <property type="protein sequence ID" value="CAF29839"/>
    <property type="gene ID" value="MMP0283"/>
</dbReference>
<dbReference type="KEGG" id="mmp:MMP0283"/>
<dbReference type="PATRIC" id="fig|267377.15.peg.286"/>
<dbReference type="eggNOG" id="arCOG04313">
    <property type="taxonomic scope" value="Archaea"/>
</dbReference>
<dbReference type="HOGENOM" id="CLU_060216_6_3_2"/>
<dbReference type="Proteomes" id="UP000000590">
    <property type="component" value="Chromosome"/>
</dbReference>
<dbReference type="GO" id="GO:0005737">
    <property type="term" value="C:cytoplasm"/>
    <property type="evidence" value="ECO:0007669"/>
    <property type="project" value="UniProtKB-SubCell"/>
</dbReference>
<dbReference type="GO" id="GO:0005524">
    <property type="term" value="F:ATP binding"/>
    <property type="evidence" value="ECO:0007669"/>
    <property type="project" value="UniProtKB-UniRule"/>
</dbReference>
<dbReference type="GO" id="GO:0046872">
    <property type="term" value="F:metal ion binding"/>
    <property type="evidence" value="ECO:0007669"/>
    <property type="project" value="UniProtKB-KW"/>
</dbReference>
<dbReference type="GO" id="GO:0004550">
    <property type="term" value="F:nucleoside diphosphate kinase activity"/>
    <property type="evidence" value="ECO:0007669"/>
    <property type="project" value="UniProtKB-UniRule"/>
</dbReference>
<dbReference type="GO" id="GO:0006241">
    <property type="term" value="P:CTP biosynthetic process"/>
    <property type="evidence" value="ECO:0007669"/>
    <property type="project" value="UniProtKB-UniRule"/>
</dbReference>
<dbReference type="GO" id="GO:0006183">
    <property type="term" value="P:GTP biosynthetic process"/>
    <property type="evidence" value="ECO:0007669"/>
    <property type="project" value="UniProtKB-UniRule"/>
</dbReference>
<dbReference type="GO" id="GO:0006228">
    <property type="term" value="P:UTP biosynthetic process"/>
    <property type="evidence" value="ECO:0007669"/>
    <property type="project" value="UniProtKB-UniRule"/>
</dbReference>
<dbReference type="CDD" id="cd04413">
    <property type="entry name" value="NDPk_I"/>
    <property type="match status" value="1"/>
</dbReference>
<dbReference type="FunFam" id="3.30.70.141:FF:000003">
    <property type="entry name" value="Nucleoside diphosphate kinase"/>
    <property type="match status" value="1"/>
</dbReference>
<dbReference type="Gene3D" id="3.30.70.141">
    <property type="entry name" value="Nucleoside diphosphate kinase-like domain"/>
    <property type="match status" value="1"/>
</dbReference>
<dbReference type="HAMAP" id="MF_00451">
    <property type="entry name" value="NDP_kinase"/>
    <property type="match status" value="1"/>
</dbReference>
<dbReference type="InterPro" id="IPR034907">
    <property type="entry name" value="NDK-like_dom"/>
</dbReference>
<dbReference type="InterPro" id="IPR036850">
    <property type="entry name" value="NDK-like_dom_sf"/>
</dbReference>
<dbReference type="InterPro" id="IPR001564">
    <property type="entry name" value="Nucleoside_diP_kinase"/>
</dbReference>
<dbReference type="InterPro" id="IPR023005">
    <property type="entry name" value="Nucleoside_diP_kinase_AS"/>
</dbReference>
<dbReference type="NCBIfam" id="NF001908">
    <property type="entry name" value="PRK00668.1"/>
    <property type="match status" value="1"/>
</dbReference>
<dbReference type="NCBIfam" id="NF011112">
    <property type="entry name" value="PRK14540.1"/>
    <property type="match status" value="1"/>
</dbReference>
<dbReference type="PANTHER" id="PTHR11349">
    <property type="entry name" value="NUCLEOSIDE DIPHOSPHATE KINASE"/>
    <property type="match status" value="1"/>
</dbReference>
<dbReference type="Pfam" id="PF00334">
    <property type="entry name" value="NDK"/>
    <property type="match status" value="1"/>
</dbReference>
<dbReference type="PRINTS" id="PR01243">
    <property type="entry name" value="NUCDPKINASE"/>
</dbReference>
<dbReference type="SMART" id="SM00562">
    <property type="entry name" value="NDK"/>
    <property type="match status" value="1"/>
</dbReference>
<dbReference type="SUPFAM" id="SSF54919">
    <property type="entry name" value="Nucleoside diphosphate kinase, NDK"/>
    <property type="match status" value="1"/>
</dbReference>
<dbReference type="PROSITE" id="PS00469">
    <property type="entry name" value="NDPK"/>
    <property type="match status" value="1"/>
</dbReference>
<dbReference type="PROSITE" id="PS51374">
    <property type="entry name" value="NDPK_LIKE"/>
    <property type="match status" value="1"/>
</dbReference>
<sequence>MERTFVALKPDTVERKLVGRVIQRFEDRGFEIVEMRMLTLTMEMAEEYYGEHKGKEFYERLIKFMTSGRIVAMVIKGERAISTVRKMLGNTCPCDAEPGTIRGDFGLYTPANIIHASDSLESAEREIDLFFGR</sequence>
<name>NDK_METMP</name>
<gene>
    <name evidence="1" type="primary">ndk</name>
    <name type="ordered locus">MMP0283</name>
</gene>
<reference key="1">
    <citation type="journal article" date="2004" name="J. Bacteriol.">
        <title>Complete genome sequence of the genetically tractable hydrogenotrophic methanogen Methanococcus maripaludis.</title>
        <authorList>
            <person name="Hendrickson E.L."/>
            <person name="Kaul R."/>
            <person name="Zhou Y."/>
            <person name="Bovee D."/>
            <person name="Chapman P."/>
            <person name="Chung J."/>
            <person name="Conway de Macario E."/>
            <person name="Dodsworth J.A."/>
            <person name="Gillett W."/>
            <person name="Graham D.E."/>
            <person name="Hackett M."/>
            <person name="Haydock A.K."/>
            <person name="Kang A."/>
            <person name="Land M.L."/>
            <person name="Levy R."/>
            <person name="Lie T.J."/>
            <person name="Major T.A."/>
            <person name="Moore B.C."/>
            <person name="Porat I."/>
            <person name="Palmeiri A."/>
            <person name="Rouse G."/>
            <person name="Saenphimmachak C."/>
            <person name="Soell D."/>
            <person name="Van Dien S."/>
            <person name="Wang T."/>
            <person name="Whitman W.B."/>
            <person name="Xia Q."/>
            <person name="Zhang Y."/>
            <person name="Larimer F.W."/>
            <person name="Olson M.V."/>
            <person name="Leigh J.A."/>
        </authorList>
    </citation>
    <scope>NUCLEOTIDE SEQUENCE [LARGE SCALE GENOMIC DNA]</scope>
    <source>
        <strain>DSM 14266 / JCM 13030 / NBRC 101832 / S2 / LL</strain>
    </source>
</reference>
<evidence type="ECO:0000255" key="1">
    <source>
        <dbReference type="HAMAP-Rule" id="MF_00451"/>
    </source>
</evidence>
<evidence type="ECO:0000305" key="2"/>
<feature type="chain" id="PRO_0000137005" description="Nucleoside diphosphate kinase">
    <location>
        <begin position="1"/>
        <end position="133"/>
    </location>
</feature>
<feature type="active site" description="Pros-phosphohistidine intermediate" evidence="1">
    <location>
        <position position="115"/>
    </location>
</feature>
<feature type="binding site" evidence="1">
    <location>
        <position position="9"/>
    </location>
    <ligand>
        <name>ATP</name>
        <dbReference type="ChEBI" id="CHEBI:30616"/>
    </ligand>
</feature>
<feature type="binding site" evidence="1">
    <location>
        <position position="57"/>
    </location>
    <ligand>
        <name>ATP</name>
        <dbReference type="ChEBI" id="CHEBI:30616"/>
    </ligand>
</feature>
<feature type="binding site" evidence="1">
    <location>
        <position position="85"/>
    </location>
    <ligand>
        <name>ATP</name>
        <dbReference type="ChEBI" id="CHEBI:30616"/>
    </ligand>
</feature>
<feature type="binding site" evidence="1">
    <location>
        <position position="91"/>
    </location>
    <ligand>
        <name>ATP</name>
        <dbReference type="ChEBI" id="CHEBI:30616"/>
    </ligand>
</feature>
<feature type="binding site" evidence="1">
    <location>
        <position position="102"/>
    </location>
    <ligand>
        <name>ATP</name>
        <dbReference type="ChEBI" id="CHEBI:30616"/>
    </ligand>
</feature>
<feature type="binding site" evidence="1">
    <location>
        <position position="112"/>
    </location>
    <ligand>
        <name>ATP</name>
        <dbReference type="ChEBI" id="CHEBI:30616"/>
    </ligand>
</feature>
<protein>
    <recommendedName>
        <fullName evidence="1">Nucleoside diphosphate kinase</fullName>
        <shortName evidence="1">NDK</shortName>
        <shortName evidence="1">NDP kinase</shortName>
        <ecNumber evidence="1">2.7.4.6</ecNumber>
    </recommendedName>
    <alternativeName>
        <fullName evidence="1">Nucleoside-2-P kinase</fullName>
    </alternativeName>
</protein>
<accession>Q6M0I7</accession>
<comment type="function">
    <text evidence="1">Major role in the synthesis of nucleoside triphosphates other than ATP. The ATP gamma phosphate is transferred to the NDP beta phosphate via a ping-pong mechanism, using a phosphorylated active-site intermediate.</text>
</comment>
<comment type="catalytic activity">
    <reaction evidence="1">
        <text>a 2'-deoxyribonucleoside 5'-diphosphate + ATP = a 2'-deoxyribonucleoside 5'-triphosphate + ADP</text>
        <dbReference type="Rhea" id="RHEA:44640"/>
        <dbReference type="ChEBI" id="CHEBI:30616"/>
        <dbReference type="ChEBI" id="CHEBI:61560"/>
        <dbReference type="ChEBI" id="CHEBI:73316"/>
        <dbReference type="ChEBI" id="CHEBI:456216"/>
        <dbReference type="EC" id="2.7.4.6"/>
    </reaction>
</comment>
<comment type="catalytic activity">
    <reaction evidence="1">
        <text>a ribonucleoside 5'-diphosphate + ATP = a ribonucleoside 5'-triphosphate + ADP</text>
        <dbReference type="Rhea" id="RHEA:18113"/>
        <dbReference type="ChEBI" id="CHEBI:30616"/>
        <dbReference type="ChEBI" id="CHEBI:57930"/>
        <dbReference type="ChEBI" id="CHEBI:61557"/>
        <dbReference type="ChEBI" id="CHEBI:456216"/>
        <dbReference type="EC" id="2.7.4.6"/>
    </reaction>
</comment>
<comment type="cofactor">
    <cofactor evidence="1">
        <name>Mg(2+)</name>
        <dbReference type="ChEBI" id="CHEBI:18420"/>
    </cofactor>
</comment>
<comment type="subcellular location">
    <subcellularLocation>
        <location evidence="1">Cytoplasm</location>
    </subcellularLocation>
</comment>
<comment type="similarity">
    <text evidence="1">Belongs to the NDK family.</text>
</comment>
<comment type="sequence caution" evidence="2">
    <conflict type="erroneous initiation">
        <sequence resource="EMBL-CDS" id="CAF29839"/>
    </conflict>
</comment>
<organism>
    <name type="scientific">Methanococcus maripaludis (strain DSM 14266 / JCM 13030 / NBRC 101832 / S2 / LL)</name>
    <dbReference type="NCBI Taxonomy" id="267377"/>
    <lineage>
        <taxon>Archaea</taxon>
        <taxon>Methanobacteriati</taxon>
        <taxon>Methanobacteriota</taxon>
        <taxon>Methanomada group</taxon>
        <taxon>Methanococci</taxon>
        <taxon>Methanococcales</taxon>
        <taxon>Methanococcaceae</taxon>
        <taxon>Methanococcus</taxon>
    </lineage>
</organism>